<organismHost>
    <name type="scientific">Cryphonectria parasitica</name>
    <name type="common">Chestnut blight fungus</name>
    <name type="synonym">Endothia parasitica</name>
    <dbReference type="NCBI Taxonomy" id="5116"/>
</organismHost>
<name>VP7_MYRV9</name>
<protein>
    <recommendedName>
        <fullName>Uncharacterized protein VP7</fullName>
    </recommendedName>
</protein>
<feature type="chain" id="PRO_0000403429" description="Uncharacterized protein VP7">
    <location>
        <begin position="1"/>
        <end position="469"/>
    </location>
</feature>
<feature type="region of interest" description="Disordered" evidence="1">
    <location>
        <begin position="248"/>
        <end position="314"/>
    </location>
</feature>
<feature type="region of interest" description="Disordered" evidence="1">
    <location>
        <begin position="327"/>
        <end position="418"/>
    </location>
</feature>
<feature type="compositionally biased region" description="Polar residues" evidence="1">
    <location>
        <begin position="292"/>
        <end position="305"/>
    </location>
</feature>
<feature type="compositionally biased region" description="Polar residues" evidence="1">
    <location>
        <begin position="350"/>
        <end position="365"/>
    </location>
</feature>
<feature type="compositionally biased region" description="Low complexity" evidence="1">
    <location>
        <begin position="366"/>
        <end position="377"/>
    </location>
</feature>
<organism>
    <name type="scientific">Cryphonectria parasitica mycoreovirus 1 (strain 9B21)</name>
    <name type="common">CpMYRV-1</name>
    <dbReference type="NCBI Taxonomy" id="230407"/>
    <lineage>
        <taxon>Viruses</taxon>
        <taxon>Riboviria</taxon>
        <taxon>Orthornavirae</taxon>
        <taxon>Duplornaviricota</taxon>
        <taxon>Resentoviricetes</taxon>
        <taxon>Reovirales</taxon>
        <taxon>Spinareoviridae</taxon>
        <taxon>Mycoreovirus</taxon>
        <taxon>Mycoreovirus 1</taxon>
    </lineage>
</organism>
<keyword id="KW-1185">Reference proteome</keyword>
<evidence type="ECO:0000256" key="1">
    <source>
        <dbReference type="SAM" id="MobiDB-lite"/>
    </source>
</evidence>
<gene>
    <name type="primary">S7</name>
</gene>
<reference key="1">
    <citation type="journal article" date="2004" name="J. Gen. Virol.">
        <title>Complete genome sequence of Mycoreovirus-1/Cp9B21, a member of a novel genus within the family Reoviridae, isolated from the chestnut blight fungus Cryphonectria parasitica.</title>
        <authorList>
            <person name="Suzuki N."/>
            <person name="Supyani S."/>
            <person name="Maruyama K."/>
            <person name="Hillman B.I."/>
        </authorList>
    </citation>
    <scope>NUCLEOTIDE SEQUENCE [GENOMIC RNA]</scope>
</reference>
<accession>Q65YU9</accession>
<proteinExistence type="predicted"/>
<dbReference type="EMBL" id="AB179639">
    <property type="protein sequence ID" value="BAD51417.1"/>
    <property type="molecule type" value="Genomic_RNA"/>
</dbReference>
<dbReference type="RefSeq" id="YP_001936010.1">
    <property type="nucleotide sequence ID" value="NC_010749.1"/>
</dbReference>
<dbReference type="GeneID" id="6334549"/>
<dbReference type="KEGG" id="vg:6334549"/>
<dbReference type="Proteomes" id="UP000006719">
    <property type="component" value="Genome"/>
</dbReference>
<sequence>MALTIYQHSSSLTSHLQTVHQTQVQFRKFVGITKVWDAQVRDKKLLALAHTEIIVRLSDPSAIPKLESVRIASGHINHPSVTFVTDPEKCPLCTNPSVSSSKSLSDLPTSGVVLKLRDLNLKSPLQMNDVILETGVTGLDIEAHILGRHYPHLAIILLGGVEHLVNIQTTTLTQHYQDLTLNLFGTTYKAGYLNSLRTISSEQEQPVYNGPGIRTLVPNGHVIIPNTPPPAQINQAASQGVITYQQSRDDNEDPFTTHHFRPDDGSDFPQSEHTNVPALVLSPSPSAMPPVESSNTRDQQTNAASAFTPIEPESRVADWSEDFDSAQMDQNLTPPQPPAPASTPEDTDSTARQPQVTPTRVPNTVTATSASTPASTSQIQFGDRSPVTMTQHTLRAPPPPPQPTNRNITPDFLRPRPTDVPSSNFNHLAILRNPTDQALTDRLNALAGLVNAGVLDPQECREILQTLKN</sequence>